<organism>
    <name type="scientific">Hepatitis B virus genotype A2 subtype adw (isolate Japan/Nishioka/1983)</name>
    <name type="common">HBV-A</name>
    <dbReference type="NCBI Taxonomy" id="482134"/>
    <lineage>
        <taxon>Viruses</taxon>
        <taxon>Riboviria</taxon>
        <taxon>Pararnavirae</taxon>
        <taxon>Artverviricota</taxon>
        <taxon>Revtraviricetes</taxon>
        <taxon>Blubervirales</taxon>
        <taxon>Hepadnaviridae</taxon>
        <taxon>Orthohepadnavirus</taxon>
        <taxon>Hepatitis B virus</taxon>
    </lineage>
</organism>
<feature type="initiator methionine" description="Removed; by host" evidence="3">
    <location>
        <position position="1"/>
    </location>
</feature>
<feature type="chain" id="PRO_0000038097" description="Large envelope protein" evidence="3">
    <location>
        <begin position="2"/>
        <end position="389"/>
    </location>
</feature>
<feature type="topological domain" description="Intravirion; in internal conformation" evidence="3">
    <location>
        <begin position="2"/>
        <end position="242"/>
    </location>
</feature>
<feature type="topological domain" description="Virion surface; in external conformation" evidence="3">
    <location>
        <begin position="2"/>
        <end position="170"/>
    </location>
</feature>
<feature type="transmembrane region" description="Helical; Name=TM1; Note=In external conformation" evidence="3">
    <location>
        <begin position="171"/>
        <end position="191"/>
    </location>
</feature>
<feature type="topological domain" description="Intravirion; in external conformation" evidence="3">
    <location>
        <begin position="192"/>
        <end position="242"/>
    </location>
</feature>
<feature type="transmembrane region" description="Helical; Name=TM2" evidence="3">
    <location>
        <begin position="243"/>
        <end position="263"/>
    </location>
</feature>
<feature type="topological domain" description="Virion surface" evidence="3">
    <location>
        <begin position="264"/>
        <end position="337"/>
    </location>
</feature>
<feature type="transmembrane region" description="Helical" evidence="3">
    <location>
        <begin position="338"/>
        <end position="358"/>
    </location>
</feature>
<feature type="topological domain" description="Intravirion" evidence="3">
    <location>
        <begin position="359"/>
        <end position="364"/>
    </location>
</feature>
<feature type="transmembrane region" description="Helical; Name=TM3" evidence="3">
    <location>
        <begin position="365"/>
        <end position="387"/>
    </location>
</feature>
<feature type="topological domain" description="Virion surface" evidence="3">
    <location>
        <begin position="388"/>
        <end position="389"/>
    </location>
</feature>
<feature type="region of interest" description="Pre-S" evidence="3">
    <location>
        <begin position="2"/>
        <end position="163"/>
    </location>
</feature>
<feature type="region of interest" description="Pre-S1" evidence="3">
    <location>
        <begin position="2"/>
        <end position="108"/>
    </location>
</feature>
<feature type="region of interest" description="Disordered" evidence="4">
    <location>
        <begin position="77"/>
        <end position="103"/>
    </location>
</feature>
<feature type="region of interest" description="Pre-S2" evidence="3">
    <location>
        <begin position="109"/>
        <end position="163"/>
    </location>
</feature>
<feature type="compositionally biased region" description="Polar residues" evidence="4">
    <location>
        <begin position="77"/>
        <end position="95"/>
    </location>
</feature>
<feature type="lipid moiety-binding region" description="N-myristoyl glycine; by host" evidence="3">
    <location>
        <position position="2"/>
    </location>
</feature>
<feature type="glycosylation site" description="N-linked (GlcNAc...) asparagine; by host" evidence="3">
    <location>
        <position position="309"/>
    </location>
</feature>
<feature type="splice variant" id="VSP_031354" description="In isoform S." evidence="5">
    <location>
        <begin position="1"/>
        <end position="163"/>
    </location>
</feature>
<feature type="splice variant" id="VSP_031355" description="In isoform M." evidence="5">
    <location>
        <begin position="1"/>
        <end position="108"/>
    </location>
</feature>
<feature type="modified residue" description="N-acetylmethionine" evidence="1">
    <location sequence="P03142-2">
        <position position="1"/>
    </location>
</feature>
<sequence>MGTNLSVPNPLGFLPDHQLDPAFGANSTNPDWDFNPIKDHWPAANQVGVGAFGPGLTPPHGGILGWSPQAQGILTTVSTIPPPASTNRQSGRQPTPISPPLRDSHPQAMQWNSTALHQALQDPRVRGLYLPAGGSSSGTVNPAPNIASHISSISARTGDPVTIMENITSGFLGPLLVLQAGFFLLTRILTIPQSLDSWWTSLNFLGGSPVCLGQNSQSPTSNHSPTSCPPICPGYRWMCLRRFIIFLFILLLCLIFLLVLLDYQGMLPVCPLIPGSTTTSTGPCKTCTTPAQGNSKFPSCCCTKPTDGNCTCIPIPSSWAFAKYLWEWASVRFSWLSLLVPFVQWFVGLSPTVWLSAIWMMWYWGPSLYSIVSPFIPLLPIFFCLWVYI</sequence>
<comment type="function">
    <text evidence="3">The large envelope protein exists in two topological conformations, one which is termed 'external' or Le-HBsAg and the other 'internal' or Li-HBsAg. In its external conformation the protein attaches the virus to cell receptors and thereby initiating infection. This interaction determines the species specificity and liver tropism. This attachment induces virion internalization predominantly through caveolin-mediated endocytosis. The large envelope protein also assures fusion between virion membrane and endosomal membrane. In its internal conformation the protein plays a role in virion morphogenesis and mediates the contact with the nucleocapsid like a matrix protein.</text>
</comment>
<comment type="function">
    <text evidence="3">The middle envelope protein plays an important role in the budding of the virion. It is involved in the induction of budding in a nucleocapsid independent way. In this process the majority of envelope proteins bud to form subviral lipoprotein particles of 22 nm of diameter that do not contain a nucleocapsid.</text>
</comment>
<comment type="subunit">
    <molecule>Isoform L</molecule>
    <text evidence="2">In its internal form (Li-HBsAg), interacts with the capsid protein and with the isoform S. Interacts with host chaperone CANX.</text>
</comment>
<comment type="subunit">
    <molecule>Isoform M</molecule>
    <text evidence="2">Associates with host chaperone CANX through its pre-S2 N glycan; this association may be essential for isoform M proper secretion.</text>
</comment>
<comment type="subunit">
    <molecule>Isoform S</molecule>
    <text evidence="2">Interacts with isoform L. Interacts with the antigens of satellite virus HDV (HDVAgs); this interaction is required for encapsidation of HDV genomic RNA.</text>
</comment>
<comment type="subcellular location">
    <subcellularLocation>
        <location evidence="3">Virion membrane</location>
    </subcellularLocation>
</comment>
<comment type="alternative products">
    <event type="alternative splicing"/>
    <event type="alternative initiation"/>
    <isoform>
        <id>P03142-1</id>
        <name>L</name>
        <name>Large envelope protein</name>
        <name>LHB</name>
        <name>L-HBsAg</name>
        <sequence type="displayed"/>
    </isoform>
    <isoform>
        <id>P03142-2</id>
        <name>M</name>
        <name>Middle envelope protein</name>
        <name>MHB</name>
        <name>M-HBsAg</name>
        <sequence type="described" ref="VSP_031355"/>
    </isoform>
    <isoform>
        <id>P03142-3</id>
        <name>S</name>
        <name>Small envelope protein</name>
        <name>SHB</name>
        <name>S-HBsAg</name>
        <sequence type="described" ref="VSP_031354"/>
    </isoform>
</comment>
<comment type="domain">
    <text evidence="3">The large envelope protein is synthesized with the pre-S region at the cytosolic side of the endoplasmic reticulum and, hence will be within the virion after budding. Therefore the pre-S region is not N-glycosylated. Later a post-translational translocation of N-terminal pre-S and TM1 domains occur in about 50% of proteins at the virion surface. These molecules change their topology by an unknown mechanism, resulting in exposure of pre-S region at virion surface. For isoform M in contrast, the pre-S2 region is translocated cotranslationally to the endoplasmic reticulum lumen and is N-glycosylated.</text>
</comment>
<comment type="PTM">
    <text evidence="1 3">Isoform M is N-terminally acetylated by host at a ratio of 90%, and N-glycosylated by host at the pre-S2 region.</text>
</comment>
<comment type="PTM">
    <text evidence="3">Myristoylated.</text>
</comment>
<comment type="biotechnology">
    <text>Systematic vaccination of individuals at risk of exposure to the virus has been the main method of controlling the morbidity and mortality associated with hepatitis B. The first hepatitis B vaccine was manufactured by the purification and inactivation of HBsAg obtained from the plasma of chronic hepatitis B virus carriers. The vaccine is now produced by recombinant DNA techniques and expression of the S isoform in yeast cells. The pre-S region do not seem to induce strong enough antigenic response.</text>
</comment>
<comment type="similarity">
    <text evidence="3">Belongs to the orthohepadnavirus major surface antigen family.</text>
</comment>
<comment type="sequence caution" evidence="5">
    <conflict type="erroneous initiation">
        <sequence resource="EMBL-CDS" id="CAA24233"/>
    </conflict>
</comment>
<organismHost>
    <name type="scientific">Homo sapiens</name>
    <name type="common">Human</name>
    <dbReference type="NCBI Taxonomy" id="9606"/>
</organismHost>
<organismHost>
    <name type="scientific">Pan troglodytes</name>
    <name type="common">Chimpanzee</name>
    <dbReference type="NCBI Taxonomy" id="9598"/>
</organismHost>
<name>HBSAG_HBVA2</name>
<keyword id="KW-0007">Acetylation</keyword>
<keyword id="KW-0024">Alternative initiation</keyword>
<keyword id="KW-0025">Alternative splicing</keyword>
<keyword id="KW-1166">Caveolin-mediated endocytosis of virus by host</keyword>
<keyword id="KW-1170">Fusion of virus membrane with host endosomal membrane</keyword>
<keyword id="KW-1168">Fusion of virus membrane with host membrane</keyword>
<keyword id="KW-0325">Glycoprotein</keyword>
<keyword id="KW-0945">Host-virus interaction</keyword>
<keyword id="KW-0449">Lipoprotein</keyword>
<keyword id="KW-0472">Membrane</keyword>
<keyword id="KW-0519">Myristate</keyword>
<keyword id="KW-0812">Transmembrane</keyword>
<keyword id="KW-1133">Transmembrane helix</keyword>
<keyword id="KW-1161">Viral attachment to host cell</keyword>
<keyword id="KW-0261">Viral envelope protein</keyword>
<keyword id="KW-1162">Viral penetration into host cytoplasm</keyword>
<keyword id="KW-0946">Virion</keyword>
<keyword id="KW-1164">Virus endocytosis by host</keyword>
<keyword id="KW-1160">Virus entry into host cell</keyword>
<protein>
    <recommendedName>
        <fullName evidence="3">Large envelope protein</fullName>
    </recommendedName>
    <alternativeName>
        <fullName evidence="3">L glycoprotein</fullName>
    </alternativeName>
    <alternativeName>
        <fullName evidence="3">L-HBsAg</fullName>
        <shortName evidence="3">LHB</shortName>
    </alternativeName>
    <alternativeName>
        <fullName evidence="3">Large S protein</fullName>
    </alternativeName>
    <alternativeName>
        <fullName evidence="3">Large surface protein</fullName>
    </alternativeName>
    <alternativeName>
        <fullName evidence="3">Major surface antigen</fullName>
    </alternativeName>
</protein>
<dbReference type="EMBL" id="V00866">
    <property type="protein sequence ID" value="CAA24233.1"/>
    <property type="status" value="ALT_INIT"/>
    <property type="molecule type" value="Genomic_DNA"/>
</dbReference>
<dbReference type="PIR" id="A93460">
    <property type="entry name" value="SAVLVE"/>
</dbReference>
<dbReference type="SMR" id="P03142"/>
<dbReference type="GlyCosmos" id="P03142">
    <property type="glycosylation" value="1 site, No reported glycans"/>
</dbReference>
<dbReference type="ABCD" id="P03142">
    <property type="antibodies" value="17 sequenced antibodies"/>
</dbReference>
<dbReference type="Proteomes" id="UP000007906">
    <property type="component" value="Genome"/>
</dbReference>
<dbReference type="GO" id="GO:0016020">
    <property type="term" value="C:membrane"/>
    <property type="evidence" value="ECO:0007669"/>
    <property type="project" value="UniProtKB-UniRule"/>
</dbReference>
<dbReference type="GO" id="GO:0019031">
    <property type="term" value="C:viral envelope"/>
    <property type="evidence" value="ECO:0007669"/>
    <property type="project" value="UniProtKB-KW"/>
</dbReference>
<dbReference type="GO" id="GO:0055036">
    <property type="term" value="C:virion membrane"/>
    <property type="evidence" value="ECO:0007669"/>
    <property type="project" value="UniProtKB-SubCell"/>
</dbReference>
<dbReference type="GO" id="GO:0075513">
    <property type="term" value="P:caveolin-mediated endocytosis of virus by host cell"/>
    <property type="evidence" value="ECO:0007669"/>
    <property type="project" value="UniProtKB-KW"/>
</dbReference>
<dbReference type="GO" id="GO:0039654">
    <property type="term" value="P:fusion of virus membrane with host endosome membrane"/>
    <property type="evidence" value="ECO:0007669"/>
    <property type="project" value="UniProtKB-KW"/>
</dbReference>
<dbReference type="GO" id="GO:0019062">
    <property type="term" value="P:virion attachment to host cell"/>
    <property type="evidence" value="ECO:0007669"/>
    <property type="project" value="UniProtKB-UniRule"/>
</dbReference>
<dbReference type="HAMAP" id="MF_04075">
    <property type="entry name" value="HBV_HBSAG"/>
    <property type="match status" value="1"/>
</dbReference>
<dbReference type="InterPro" id="IPR000349">
    <property type="entry name" value="HBV_HBSAG"/>
</dbReference>
<dbReference type="Pfam" id="PF00695">
    <property type="entry name" value="vMSA"/>
    <property type="match status" value="1"/>
</dbReference>
<gene>
    <name evidence="3" type="primary">S</name>
</gene>
<accession>P03142</accession>
<reference key="1">
    <citation type="journal article" date="1983" name="Nucleic Acids Res.">
        <title>The complete nucleotide sequences of the cloned hepatitis B virus DNA; subtype adr and adw.</title>
        <authorList>
            <person name="Ono Y."/>
            <person name="Onda H."/>
            <person name="Sasada R."/>
            <person name="Igarashi K."/>
            <person name="Sugino Y."/>
            <person name="Nishioka K."/>
        </authorList>
    </citation>
    <scope>NUCLEOTIDE SEQUENCE [GENOMIC DNA]</scope>
</reference>
<reference key="2">
    <citation type="journal article" date="1996" name="Intervirology">
        <title>Functions of the large hepatitis B virus surface protein in viral particle morphogenesis.</title>
        <authorList>
            <person name="Bruss V."/>
            <person name="Gerhardt E."/>
            <person name="Vieluf K."/>
            <person name="Wunderlich G."/>
        </authorList>
    </citation>
    <scope>REVIEW</scope>
</reference>
<reference key="3">
    <citation type="journal article" date="1998" name="Adv. Exp. Med. Biol.">
        <title>Role of glycan processing in hepatitis B virus envelope protein trafficking.</title>
        <authorList>
            <person name="Block T.M."/>
            <person name="Lu X."/>
            <person name="Mehta A."/>
            <person name="Park J."/>
            <person name="Blumberg B.S."/>
            <person name="Dwek R."/>
        </authorList>
    </citation>
    <scope>REVIEW</scope>
</reference>
<reference key="4">
    <citation type="journal article" date="2004" name="Virus Res.">
        <title>Envelopment of the hepatitis B virus nucleocapsid.</title>
        <authorList>
            <person name="Bruss V."/>
        </authorList>
    </citation>
    <scope>REVIEW</scope>
</reference>
<reference key="5">
    <citation type="journal article" date="2006" name="Cancer Sci.">
        <title>Hepatitis B virus pre-S mutants, endoplasmic reticulum stress and hepatocarcinogenesis.</title>
        <authorList>
            <person name="Wang H.C."/>
            <person name="Huang W."/>
            <person name="Lai M.D."/>
            <person name="Su I.J."/>
        </authorList>
    </citation>
    <scope>REVIEW</scope>
</reference>
<proteinExistence type="evidence at protein level"/>
<evidence type="ECO:0000250" key="1">
    <source>
        <dbReference type="UniProtKB" id="P03138"/>
    </source>
</evidence>
<evidence type="ECO:0000250" key="2">
    <source>
        <dbReference type="UniProtKB" id="P03141"/>
    </source>
</evidence>
<evidence type="ECO:0000255" key="3">
    <source>
        <dbReference type="HAMAP-Rule" id="MF_04075"/>
    </source>
</evidence>
<evidence type="ECO:0000256" key="4">
    <source>
        <dbReference type="SAM" id="MobiDB-lite"/>
    </source>
</evidence>
<evidence type="ECO:0000305" key="5"/>